<gene>
    <name evidence="1" type="primary">vapC24</name>
    <name type="ordered locus">Rv0240</name>
</gene>
<comment type="function">
    <text evidence="1">Toxic component of a type II toxin-antitoxin (TA) system. An RNase. Its cognate antitoxin is VapB24 (By similarity).</text>
</comment>
<comment type="cofactor">
    <cofactor evidence="1">
        <name>Mg(2+)</name>
        <dbReference type="ChEBI" id="CHEBI:18420"/>
    </cofactor>
</comment>
<comment type="similarity">
    <text evidence="1">Belongs to the PINc/VapC protein family.</text>
</comment>
<dbReference type="EC" id="3.1.-.-" evidence="1"/>
<dbReference type="EMBL" id="AL123456">
    <property type="protein sequence ID" value="CCP42969.1"/>
    <property type="molecule type" value="Genomic_DNA"/>
</dbReference>
<dbReference type="PIR" id="D70938">
    <property type="entry name" value="D70938"/>
</dbReference>
<dbReference type="RefSeq" id="NP_214754.1">
    <property type="nucleotide sequence ID" value="NC_000962.3"/>
</dbReference>
<dbReference type="RefSeq" id="WP_003900837.1">
    <property type="nucleotide sequence ID" value="NZ_NVQJ01000001.1"/>
</dbReference>
<dbReference type="SMR" id="P9WF87"/>
<dbReference type="STRING" id="83332.Rv0240"/>
<dbReference type="PaxDb" id="83332-Rv0240"/>
<dbReference type="DNASU" id="886688"/>
<dbReference type="GeneID" id="886688"/>
<dbReference type="KEGG" id="mtu:Rv0240"/>
<dbReference type="KEGG" id="mtv:RVBD_0240"/>
<dbReference type="TubercuList" id="Rv0240"/>
<dbReference type="eggNOG" id="COG1848">
    <property type="taxonomic scope" value="Bacteria"/>
</dbReference>
<dbReference type="InParanoid" id="P9WF87"/>
<dbReference type="OrthoDB" id="556169at2"/>
<dbReference type="Proteomes" id="UP000001584">
    <property type="component" value="Chromosome"/>
</dbReference>
<dbReference type="GO" id="GO:0005886">
    <property type="term" value="C:plasma membrane"/>
    <property type="evidence" value="ECO:0007005"/>
    <property type="project" value="MTBBASE"/>
</dbReference>
<dbReference type="GO" id="GO:0000287">
    <property type="term" value="F:magnesium ion binding"/>
    <property type="evidence" value="ECO:0007669"/>
    <property type="project" value="UniProtKB-UniRule"/>
</dbReference>
<dbReference type="GO" id="GO:0004540">
    <property type="term" value="F:RNA nuclease activity"/>
    <property type="evidence" value="ECO:0007669"/>
    <property type="project" value="InterPro"/>
</dbReference>
<dbReference type="GO" id="GO:0045926">
    <property type="term" value="P:negative regulation of growth"/>
    <property type="evidence" value="ECO:0007669"/>
    <property type="project" value="UniProtKB-ARBA"/>
</dbReference>
<dbReference type="FunFam" id="3.40.50.1010:FF:000069">
    <property type="entry name" value="Ribonuclease VapC"/>
    <property type="match status" value="1"/>
</dbReference>
<dbReference type="Gene3D" id="3.40.50.1010">
    <property type="entry name" value="5'-nuclease"/>
    <property type="match status" value="1"/>
</dbReference>
<dbReference type="HAMAP" id="MF_00265">
    <property type="entry name" value="VapC_Nob1"/>
    <property type="match status" value="1"/>
</dbReference>
<dbReference type="InterPro" id="IPR006226">
    <property type="entry name" value="Mtu_PIN"/>
</dbReference>
<dbReference type="InterPro" id="IPR029060">
    <property type="entry name" value="PIN-like_dom_sf"/>
</dbReference>
<dbReference type="InterPro" id="IPR002716">
    <property type="entry name" value="PIN_dom"/>
</dbReference>
<dbReference type="InterPro" id="IPR022907">
    <property type="entry name" value="VapC_family"/>
</dbReference>
<dbReference type="NCBIfam" id="TIGR00028">
    <property type="entry name" value="Mtu_PIN_fam"/>
    <property type="match status" value="1"/>
</dbReference>
<dbReference type="Pfam" id="PF01850">
    <property type="entry name" value="PIN"/>
    <property type="match status" value="1"/>
</dbReference>
<dbReference type="SUPFAM" id="SSF88723">
    <property type="entry name" value="PIN domain-like"/>
    <property type="match status" value="1"/>
</dbReference>
<evidence type="ECO:0000255" key="1">
    <source>
        <dbReference type="HAMAP-Rule" id="MF_00265"/>
    </source>
</evidence>
<reference key="1">
    <citation type="journal article" date="1998" name="Nature">
        <title>Deciphering the biology of Mycobacterium tuberculosis from the complete genome sequence.</title>
        <authorList>
            <person name="Cole S.T."/>
            <person name="Brosch R."/>
            <person name="Parkhill J."/>
            <person name="Garnier T."/>
            <person name="Churcher C.M."/>
            <person name="Harris D.E."/>
            <person name="Gordon S.V."/>
            <person name="Eiglmeier K."/>
            <person name="Gas S."/>
            <person name="Barry C.E. III"/>
            <person name="Tekaia F."/>
            <person name="Badcock K."/>
            <person name="Basham D."/>
            <person name="Brown D."/>
            <person name="Chillingworth T."/>
            <person name="Connor R."/>
            <person name="Davies R.M."/>
            <person name="Devlin K."/>
            <person name="Feltwell T."/>
            <person name="Gentles S."/>
            <person name="Hamlin N."/>
            <person name="Holroyd S."/>
            <person name="Hornsby T."/>
            <person name="Jagels K."/>
            <person name="Krogh A."/>
            <person name="McLean J."/>
            <person name="Moule S."/>
            <person name="Murphy L.D."/>
            <person name="Oliver S."/>
            <person name="Osborne J."/>
            <person name="Quail M.A."/>
            <person name="Rajandream M.A."/>
            <person name="Rogers J."/>
            <person name="Rutter S."/>
            <person name="Seeger K."/>
            <person name="Skelton S."/>
            <person name="Squares S."/>
            <person name="Squares R."/>
            <person name="Sulston J.E."/>
            <person name="Taylor K."/>
            <person name="Whitehead S."/>
            <person name="Barrell B.G."/>
        </authorList>
    </citation>
    <scope>NUCLEOTIDE SEQUENCE [LARGE SCALE GENOMIC DNA]</scope>
    <source>
        <strain>ATCC 25618 / H37Rv</strain>
    </source>
</reference>
<reference key="2">
    <citation type="journal article" date="2009" name="PLoS Genet.">
        <title>Comprehensive functional analysis of Mycobacterium tuberculosis toxin-antitoxin systems: implications for pathogenesis, stress responses, and evolution.</title>
        <authorList>
            <person name="Ramage H.R."/>
            <person name="Connolly L.E."/>
            <person name="Cox J.S."/>
        </authorList>
    </citation>
    <scope>POSSIBLE FUNCTION</scope>
    <source>
        <strain>ATCC 35801 / TMC 107 / Erdman</strain>
    </source>
</reference>
<reference key="3">
    <citation type="journal article" date="2011" name="Mol. Cell. Proteomics">
        <title>Proteogenomic analysis of Mycobacterium tuberculosis by high resolution mass spectrometry.</title>
        <authorList>
            <person name="Kelkar D.S."/>
            <person name="Kumar D."/>
            <person name="Kumar P."/>
            <person name="Balakrishnan L."/>
            <person name="Muthusamy B."/>
            <person name="Yadav A.K."/>
            <person name="Shrivastava P."/>
            <person name="Marimuthu A."/>
            <person name="Anand S."/>
            <person name="Sundaram H."/>
            <person name="Kingsbury R."/>
            <person name="Harsha H.C."/>
            <person name="Nair B."/>
            <person name="Prasad T.S."/>
            <person name="Chauhan D.S."/>
            <person name="Katoch K."/>
            <person name="Katoch V.M."/>
            <person name="Kumar P."/>
            <person name="Chaerkady R."/>
            <person name="Ramachandran S."/>
            <person name="Dash D."/>
            <person name="Pandey A."/>
        </authorList>
    </citation>
    <scope>IDENTIFICATION BY MASS SPECTROMETRY [LARGE SCALE ANALYSIS]</scope>
    <source>
        <strain>ATCC 25618 / H37Rv</strain>
    </source>
</reference>
<feature type="chain" id="PRO_0000407883" description="Ribonuclease VapC24">
    <location>
        <begin position="1"/>
        <end position="145"/>
    </location>
</feature>
<feature type="domain" description="PINc" evidence="1">
    <location>
        <begin position="4"/>
        <end position="123"/>
    </location>
</feature>
<feature type="binding site" evidence="1">
    <location>
        <position position="5"/>
    </location>
    <ligand>
        <name>Mg(2+)</name>
        <dbReference type="ChEBI" id="CHEBI:18420"/>
    </ligand>
</feature>
<feature type="binding site" evidence="1">
    <location>
        <position position="106"/>
    </location>
    <ligand>
        <name>Mg(2+)</name>
        <dbReference type="ChEBI" id="CHEBI:18420"/>
    </ligand>
</feature>
<organism>
    <name type="scientific">Mycobacterium tuberculosis (strain ATCC 25618 / H37Rv)</name>
    <dbReference type="NCBI Taxonomy" id="83332"/>
    <lineage>
        <taxon>Bacteria</taxon>
        <taxon>Bacillati</taxon>
        <taxon>Actinomycetota</taxon>
        <taxon>Actinomycetes</taxon>
        <taxon>Mycobacteriales</taxon>
        <taxon>Mycobacteriaceae</taxon>
        <taxon>Mycobacterium</taxon>
        <taxon>Mycobacterium tuberculosis complex</taxon>
    </lineage>
</organism>
<sequence length="145" mass="16426">MLSIDTNILLYAQNRDCPEHDAAAAFLVECAGRADVAVCELVLMELYQLLRNPTVVTRPLEGPEAAEVCQTFRRNRRWALLENAPVMNEVWVLAATPRIARRRLFDARLALTLRHHGVDEFATRNINGFTDFGFSRVWDPITSDG</sequence>
<accession>P9WF87</accession>
<accession>L0T2X7</accession>
<accession>O53663</accession>
<accession>Q7DA71</accession>
<name>VPC24_MYCTU</name>
<keyword id="KW-0378">Hydrolase</keyword>
<keyword id="KW-0460">Magnesium</keyword>
<keyword id="KW-0479">Metal-binding</keyword>
<keyword id="KW-0540">Nuclease</keyword>
<keyword id="KW-1185">Reference proteome</keyword>
<keyword id="KW-1277">Toxin-antitoxin system</keyword>
<protein>
    <recommendedName>
        <fullName evidence="1">Ribonuclease VapC24</fullName>
        <shortName evidence="1">RNase VapC24</shortName>
        <ecNumber evidence="1">3.1.-.-</ecNumber>
    </recommendedName>
    <alternativeName>
        <fullName evidence="1">Toxin VapC24</fullName>
    </alternativeName>
</protein>
<proteinExistence type="evidence at protein level"/>